<keyword id="KW-0067">ATP-binding</keyword>
<keyword id="KW-0963">Cytoplasm</keyword>
<keyword id="KW-0460">Magnesium</keyword>
<keyword id="KW-0479">Metal-binding</keyword>
<keyword id="KW-0547">Nucleotide-binding</keyword>
<keyword id="KW-0554">One-carbon metabolism</keyword>
<keyword id="KW-0630">Potassium</keyword>
<keyword id="KW-1185">Reference proteome</keyword>
<keyword id="KW-0808">Transferase</keyword>
<name>METK_TREDE</name>
<gene>
    <name evidence="1" type="primary">metK</name>
    <name type="ordered locus">TDE_2470</name>
</gene>
<comment type="function">
    <text evidence="1">Catalyzes the formation of S-adenosylmethionine (AdoMet) from methionine and ATP. The overall synthetic reaction is composed of two sequential steps, AdoMet formation and the subsequent tripolyphosphate hydrolysis which occurs prior to release of AdoMet from the enzyme.</text>
</comment>
<comment type="catalytic activity">
    <reaction evidence="1">
        <text>L-methionine + ATP + H2O = S-adenosyl-L-methionine + phosphate + diphosphate</text>
        <dbReference type="Rhea" id="RHEA:21080"/>
        <dbReference type="ChEBI" id="CHEBI:15377"/>
        <dbReference type="ChEBI" id="CHEBI:30616"/>
        <dbReference type="ChEBI" id="CHEBI:33019"/>
        <dbReference type="ChEBI" id="CHEBI:43474"/>
        <dbReference type="ChEBI" id="CHEBI:57844"/>
        <dbReference type="ChEBI" id="CHEBI:59789"/>
        <dbReference type="EC" id="2.5.1.6"/>
    </reaction>
</comment>
<comment type="cofactor">
    <cofactor evidence="1">
        <name>Mg(2+)</name>
        <dbReference type="ChEBI" id="CHEBI:18420"/>
    </cofactor>
    <text evidence="1">Binds 2 divalent ions per subunit.</text>
</comment>
<comment type="cofactor">
    <cofactor evidence="1">
        <name>K(+)</name>
        <dbReference type="ChEBI" id="CHEBI:29103"/>
    </cofactor>
    <text evidence="1">Binds 1 potassium ion per subunit.</text>
</comment>
<comment type="pathway">
    <text evidence="1">Amino-acid biosynthesis; S-adenosyl-L-methionine biosynthesis; S-adenosyl-L-methionine from L-methionine: step 1/1.</text>
</comment>
<comment type="subunit">
    <text evidence="1">Homotetramer; dimer of dimers.</text>
</comment>
<comment type="subcellular location">
    <subcellularLocation>
        <location evidence="1">Cytoplasm</location>
    </subcellularLocation>
</comment>
<comment type="similarity">
    <text evidence="1">Belongs to the AdoMet synthase family.</text>
</comment>
<evidence type="ECO:0000255" key="1">
    <source>
        <dbReference type="HAMAP-Rule" id="MF_00086"/>
    </source>
</evidence>
<reference key="1">
    <citation type="journal article" date="2004" name="Proc. Natl. Acad. Sci. U.S.A.">
        <title>Comparison of the genome of the oral pathogen Treponema denticola with other spirochete genomes.</title>
        <authorList>
            <person name="Seshadri R."/>
            <person name="Myers G.S.A."/>
            <person name="Tettelin H."/>
            <person name="Eisen J.A."/>
            <person name="Heidelberg J.F."/>
            <person name="Dodson R.J."/>
            <person name="Davidsen T.M."/>
            <person name="DeBoy R.T."/>
            <person name="Fouts D.E."/>
            <person name="Haft D.H."/>
            <person name="Selengut J."/>
            <person name="Ren Q."/>
            <person name="Brinkac L.M."/>
            <person name="Madupu R."/>
            <person name="Kolonay J.F."/>
            <person name="Durkin S.A."/>
            <person name="Daugherty S.C."/>
            <person name="Shetty J."/>
            <person name="Shvartsbeyn A."/>
            <person name="Gebregeorgis E."/>
            <person name="Geer K."/>
            <person name="Tsegaye G."/>
            <person name="Malek J.A."/>
            <person name="Ayodeji B."/>
            <person name="Shatsman S."/>
            <person name="McLeod M.P."/>
            <person name="Smajs D."/>
            <person name="Howell J.K."/>
            <person name="Pal S."/>
            <person name="Amin A."/>
            <person name="Vashisth P."/>
            <person name="McNeill T.Z."/>
            <person name="Xiang Q."/>
            <person name="Sodergren E."/>
            <person name="Baca E."/>
            <person name="Weinstock G.M."/>
            <person name="Norris S.J."/>
            <person name="Fraser C.M."/>
            <person name="Paulsen I.T."/>
        </authorList>
    </citation>
    <scope>NUCLEOTIDE SEQUENCE [LARGE SCALE GENOMIC DNA]</scope>
    <source>
        <strain>ATCC 35405 / DSM 14222 / CIP 103919 / JCM 8153 / KCTC 15104</strain>
    </source>
</reference>
<proteinExistence type="inferred from homology"/>
<protein>
    <recommendedName>
        <fullName evidence="1">S-adenosylmethionine synthase</fullName>
        <shortName evidence="1">AdoMet synthase</shortName>
        <ecNumber evidence="1">2.5.1.6</ecNumber>
    </recommendedName>
    <alternativeName>
        <fullName evidence="1">MAT</fullName>
    </alternativeName>
    <alternativeName>
        <fullName evidence="1">Methionine adenosyltransferase</fullName>
    </alternativeName>
</protein>
<sequence length="389" mass="42736">MKNDINYFTSESVSEGHPDKLCDQISDAVLDACLRDDPESHVACETFASTALVLVGGEITTNTYVDIQEIARSIAEEIGYTNTDFGLDCHSMAVMNMIHSQSPDISQGVDGTGLDEYKGQQGAGDQGMMFGFACKETPELMPAPIMFSHSVLRYAAKLRKEKVIPWLRPDSKTQITVKYEGFKPIKIDTVVLSHQHYPDVQYDELKDTLINRVIKPVLGPTGLLADDTKYFINPTGRFVIGGPFGDTGLTGRKIIVDTYGGMGRHGGGAFSGKDPSKVDRSAAYMARYIAKNVVAADLARRCEVQLAYAIGVPFPVAVRVDTFGTGEVPEEKIEKAIKEVFDMSPAGIIKTLDLKRPIYKETAAYGHFGRPEFSWEKTDKTEALKKAIK</sequence>
<dbReference type="EC" id="2.5.1.6" evidence="1"/>
<dbReference type="EMBL" id="AE017226">
    <property type="protein sequence ID" value="AAS12987.1"/>
    <property type="molecule type" value="Genomic_DNA"/>
</dbReference>
<dbReference type="RefSeq" id="NP_973068.1">
    <property type="nucleotide sequence ID" value="NC_002967.9"/>
</dbReference>
<dbReference type="RefSeq" id="WP_002680429.1">
    <property type="nucleotide sequence ID" value="NC_002967.9"/>
</dbReference>
<dbReference type="SMR" id="Q73JR4"/>
<dbReference type="STRING" id="243275.TDE_2470"/>
<dbReference type="PaxDb" id="243275-TDE_2470"/>
<dbReference type="GeneID" id="2739655"/>
<dbReference type="KEGG" id="tde:TDE_2470"/>
<dbReference type="PATRIC" id="fig|243275.7.peg.2336"/>
<dbReference type="eggNOG" id="COG0192">
    <property type="taxonomic scope" value="Bacteria"/>
</dbReference>
<dbReference type="HOGENOM" id="CLU_041802_1_1_12"/>
<dbReference type="OrthoDB" id="9801686at2"/>
<dbReference type="UniPathway" id="UPA00315">
    <property type="reaction ID" value="UER00080"/>
</dbReference>
<dbReference type="Proteomes" id="UP000008212">
    <property type="component" value="Chromosome"/>
</dbReference>
<dbReference type="GO" id="GO:0005737">
    <property type="term" value="C:cytoplasm"/>
    <property type="evidence" value="ECO:0007669"/>
    <property type="project" value="UniProtKB-SubCell"/>
</dbReference>
<dbReference type="GO" id="GO:0005524">
    <property type="term" value="F:ATP binding"/>
    <property type="evidence" value="ECO:0007669"/>
    <property type="project" value="UniProtKB-UniRule"/>
</dbReference>
<dbReference type="GO" id="GO:0000287">
    <property type="term" value="F:magnesium ion binding"/>
    <property type="evidence" value="ECO:0007669"/>
    <property type="project" value="UniProtKB-UniRule"/>
</dbReference>
<dbReference type="GO" id="GO:0004478">
    <property type="term" value="F:methionine adenosyltransferase activity"/>
    <property type="evidence" value="ECO:0007669"/>
    <property type="project" value="UniProtKB-UniRule"/>
</dbReference>
<dbReference type="GO" id="GO:0006730">
    <property type="term" value="P:one-carbon metabolic process"/>
    <property type="evidence" value="ECO:0007669"/>
    <property type="project" value="UniProtKB-KW"/>
</dbReference>
<dbReference type="GO" id="GO:0006556">
    <property type="term" value="P:S-adenosylmethionine biosynthetic process"/>
    <property type="evidence" value="ECO:0007669"/>
    <property type="project" value="UniProtKB-UniRule"/>
</dbReference>
<dbReference type="CDD" id="cd18079">
    <property type="entry name" value="S-AdoMet_synt"/>
    <property type="match status" value="1"/>
</dbReference>
<dbReference type="FunFam" id="3.30.300.10:FF:000003">
    <property type="entry name" value="S-adenosylmethionine synthase"/>
    <property type="match status" value="1"/>
</dbReference>
<dbReference type="Gene3D" id="3.30.300.10">
    <property type="match status" value="3"/>
</dbReference>
<dbReference type="HAMAP" id="MF_00086">
    <property type="entry name" value="S_AdoMet_synth1"/>
    <property type="match status" value="1"/>
</dbReference>
<dbReference type="InterPro" id="IPR022631">
    <property type="entry name" value="ADOMET_SYNTHASE_CS"/>
</dbReference>
<dbReference type="InterPro" id="IPR022630">
    <property type="entry name" value="S-AdoMet_synt_C"/>
</dbReference>
<dbReference type="InterPro" id="IPR022629">
    <property type="entry name" value="S-AdoMet_synt_central"/>
</dbReference>
<dbReference type="InterPro" id="IPR022628">
    <property type="entry name" value="S-AdoMet_synt_N"/>
</dbReference>
<dbReference type="InterPro" id="IPR002133">
    <property type="entry name" value="S-AdoMet_synthetase"/>
</dbReference>
<dbReference type="InterPro" id="IPR022636">
    <property type="entry name" value="S-AdoMet_synthetase_sfam"/>
</dbReference>
<dbReference type="NCBIfam" id="TIGR01034">
    <property type="entry name" value="metK"/>
    <property type="match status" value="1"/>
</dbReference>
<dbReference type="PANTHER" id="PTHR11964">
    <property type="entry name" value="S-ADENOSYLMETHIONINE SYNTHETASE"/>
    <property type="match status" value="1"/>
</dbReference>
<dbReference type="Pfam" id="PF02773">
    <property type="entry name" value="S-AdoMet_synt_C"/>
    <property type="match status" value="1"/>
</dbReference>
<dbReference type="Pfam" id="PF02772">
    <property type="entry name" value="S-AdoMet_synt_M"/>
    <property type="match status" value="1"/>
</dbReference>
<dbReference type="Pfam" id="PF00438">
    <property type="entry name" value="S-AdoMet_synt_N"/>
    <property type="match status" value="1"/>
</dbReference>
<dbReference type="PIRSF" id="PIRSF000497">
    <property type="entry name" value="MAT"/>
    <property type="match status" value="1"/>
</dbReference>
<dbReference type="SUPFAM" id="SSF55973">
    <property type="entry name" value="S-adenosylmethionine synthetase"/>
    <property type="match status" value="3"/>
</dbReference>
<dbReference type="PROSITE" id="PS00376">
    <property type="entry name" value="ADOMET_SYNTHASE_1"/>
    <property type="match status" value="1"/>
</dbReference>
<dbReference type="PROSITE" id="PS00377">
    <property type="entry name" value="ADOMET_SYNTHASE_2"/>
    <property type="match status" value="1"/>
</dbReference>
<organism>
    <name type="scientific">Treponema denticola (strain ATCC 35405 / DSM 14222 / CIP 103919 / JCM 8153 / KCTC 15104)</name>
    <dbReference type="NCBI Taxonomy" id="243275"/>
    <lineage>
        <taxon>Bacteria</taxon>
        <taxon>Pseudomonadati</taxon>
        <taxon>Spirochaetota</taxon>
        <taxon>Spirochaetia</taxon>
        <taxon>Spirochaetales</taxon>
        <taxon>Treponemataceae</taxon>
        <taxon>Treponema</taxon>
    </lineage>
</organism>
<feature type="chain" id="PRO_0000174616" description="S-adenosylmethionine synthase">
    <location>
        <begin position="1"/>
        <end position="389"/>
    </location>
</feature>
<feature type="region of interest" description="Flexible loop" evidence="1">
    <location>
        <begin position="101"/>
        <end position="111"/>
    </location>
</feature>
<feature type="binding site" description="in other chain" evidence="1">
    <location>
        <position position="17"/>
    </location>
    <ligand>
        <name>ATP</name>
        <dbReference type="ChEBI" id="CHEBI:30616"/>
        <note>ligand shared between two neighboring subunits</note>
    </ligand>
</feature>
<feature type="binding site" evidence="1">
    <location>
        <position position="19"/>
    </location>
    <ligand>
        <name>Mg(2+)</name>
        <dbReference type="ChEBI" id="CHEBI:18420"/>
    </ligand>
</feature>
<feature type="binding site" evidence="1">
    <location>
        <position position="45"/>
    </location>
    <ligand>
        <name>K(+)</name>
        <dbReference type="ChEBI" id="CHEBI:29103"/>
    </ligand>
</feature>
<feature type="binding site" description="in other chain" evidence="1">
    <location>
        <position position="58"/>
    </location>
    <ligand>
        <name>L-methionine</name>
        <dbReference type="ChEBI" id="CHEBI:57844"/>
        <note>ligand shared between two neighboring subunits</note>
    </ligand>
</feature>
<feature type="binding site" description="in other chain" evidence="1">
    <location>
        <position position="101"/>
    </location>
    <ligand>
        <name>L-methionine</name>
        <dbReference type="ChEBI" id="CHEBI:57844"/>
        <note>ligand shared between two neighboring subunits</note>
    </ligand>
</feature>
<feature type="binding site" description="in other chain" evidence="1">
    <location>
        <begin position="170"/>
        <end position="172"/>
    </location>
    <ligand>
        <name>ATP</name>
        <dbReference type="ChEBI" id="CHEBI:30616"/>
        <note>ligand shared between two neighboring subunits</note>
    </ligand>
</feature>
<feature type="binding site" description="in other chain" evidence="1">
    <location>
        <begin position="237"/>
        <end position="238"/>
    </location>
    <ligand>
        <name>ATP</name>
        <dbReference type="ChEBI" id="CHEBI:30616"/>
        <note>ligand shared between two neighboring subunits</note>
    </ligand>
</feature>
<feature type="binding site" evidence="1">
    <location>
        <position position="246"/>
    </location>
    <ligand>
        <name>ATP</name>
        <dbReference type="ChEBI" id="CHEBI:30616"/>
        <note>ligand shared between two neighboring subunits</note>
    </ligand>
</feature>
<feature type="binding site" evidence="1">
    <location>
        <position position="246"/>
    </location>
    <ligand>
        <name>L-methionine</name>
        <dbReference type="ChEBI" id="CHEBI:57844"/>
        <note>ligand shared between two neighboring subunits</note>
    </ligand>
</feature>
<feature type="binding site" description="in other chain" evidence="1">
    <location>
        <begin position="252"/>
        <end position="253"/>
    </location>
    <ligand>
        <name>ATP</name>
        <dbReference type="ChEBI" id="CHEBI:30616"/>
        <note>ligand shared between two neighboring subunits</note>
    </ligand>
</feature>
<feature type="binding site" evidence="1">
    <location>
        <position position="269"/>
    </location>
    <ligand>
        <name>ATP</name>
        <dbReference type="ChEBI" id="CHEBI:30616"/>
        <note>ligand shared between two neighboring subunits</note>
    </ligand>
</feature>
<feature type="binding site" evidence="1">
    <location>
        <position position="273"/>
    </location>
    <ligand>
        <name>ATP</name>
        <dbReference type="ChEBI" id="CHEBI:30616"/>
        <note>ligand shared between two neighboring subunits</note>
    </ligand>
</feature>
<feature type="binding site" description="in other chain" evidence="1">
    <location>
        <position position="277"/>
    </location>
    <ligand>
        <name>L-methionine</name>
        <dbReference type="ChEBI" id="CHEBI:57844"/>
        <note>ligand shared between two neighboring subunits</note>
    </ligand>
</feature>
<accession>Q73JR4</accession>